<protein>
    <recommendedName>
        <fullName>Oxygen-evolving enhancer protein 1, chloroplastic</fullName>
        <shortName>OEE1</shortName>
    </recommendedName>
    <alternativeName>
        <fullName>33 kDa subunit of oxygen evolving system of photosystem II</fullName>
    </alternativeName>
    <alternativeName>
        <fullName>33 kDa thylakoid membrane protein</fullName>
    </alternativeName>
    <alternativeName>
        <fullName>OEC 33 kDa subunit</fullName>
    </alternativeName>
</protein>
<gene>
    <name type="primary">PSBO</name>
</gene>
<keyword id="KW-0150">Chloroplast</keyword>
<keyword id="KW-0464">Manganese</keyword>
<keyword id="KW-0472">Membrane</keyword>
<keyword id="KW-0602">Photosynthesis</keyword>
<keyword id="KW-0604">Photosystem II</keyword>
<keyword id="KW-0934">Plastid</keyword>
<keyword id="KW-1185">Reference proteome</keyword>
<keyword id="KW-0793">Thylakoid</keyword>
<keyword id="KW-0809">Transit peptide</keyword>
<evidence type="ECO:0000250" key="1"/>
<evidence type="ECO:0000305" key="2"/>
<reference key="1">
    <citation type="journal article" date="1993" name="Plant Cell Physiol.">
        <title>The 33 kDa protein of the oxygen-evolving complex: a multi-gene family in tomato.</title>
        <authorList>
            <person name="Goerlach J."/>
            <person name="Schmid J."/>
            <person name="Amrhein N."/>
        </authorList>
    </citation>
    <scope>NUCLEOTIDE SEQUENCE [MRNA]</scope>
</reference>
<reference key="2">
    <citation type="journal article" date="1990" name="Plant Mol. Biol.">
        <title>Isolation and characterization of cDNAs from Lycopersicon esculentum and Arabidopsis thaliana encoding the 33 kDa protein of the photosystem II-associated oxygen-evolving complex.</title>
        <authorList>
            <person name="Ko K."/>
            <person name="Granell A."/>
            <person name="Bennett J."/>
            <person name="Cashmore A.R."/>
        </authorList>
    </citation>
    <scope>NUCLEOTIDE SEQUENCE [MRNA] OF 289-329</scope>
</reference>
<sequence>MAASLQAAATLMQPTKVGVRNNLQLRSAQSVSKAFGVEQGSGRLTCSLQTEIKELAQKCTDAAKIAGFALATSALVVSGANAEGVPKRLTYDEIQSKTYMEVKGTGTANQCPTIEGGVGSFAFKPGKYTAKKFCLEPTSFTVKAEGVSKNSAPDFQKTKLMTRLTYTLDEIEGPFEVSPDGTVKFEEKDGIDYAAVTVQLPGGERVPFLFTIKQLVASGKPESFSGEFLVPSYRGSSFLDPKGRGGSTGYDNAVALPAGGRGDEEELQKENVKNTASLTGKITLSVTQSKPETGEVIGVFESIQPSDTDLGAKVPKDVKIQGIWYAQLE</sequence>
<accession>P23322</accession>
<accession>Q40138</accession>
<feature type="transit peptide" description="Chloroplast" evidence="1">
    <location>
        <begin position="1"/>
        <end position="82"/>
    </location>
</feature>
<feature type="chain" id="PRO_0000029558" description="Oxygen-evolving enhancer protein 1, chloroplastic">
    <location>
        <begin position="83"/>
        <end position="329"/>
    </location>
</feature>
<feature type="sequence conflict" description="In Ref. 2; CAA36674." evidence="2" ref="2">
    <original>KPE</original>
    <variation>NPQ</variation>
    <location>
        <begin position="290"/>
        <end position="292"/>
    </location>
</feature>
<feature type="sequence conflict" description="In Ref. 2; CAA36674." evidence="2" ref="2">
    <original>V</original>
    <variation>T</variation>
    <location>
        <position position="314"/>
    </location>
</feature>
<feature type="sequence conflict" description="In Ref. 2; CAA36674." evidence="2" ref="2">
    <original>E</original>
    <variation>ES</variation>
    <location>
        <position position="329"/>
    </location>
</feature>
<dbReference type="EMBL" id="Z11999">
    <property type="protein sequence ID" value="CAA78043.1"/>
    <property type="molecule type" value="mRNA"/>
</dbReference>
<dbReference type="EMBL" id="X52427">
    <property type="protein sequence ID" value="CAA36674.1"/>
    <property type="molecule type" value="mRNA"/>
</dbReference>
<dbReference type="PIR" id="T06368">
    <property type="entry name" value="T06368"/>
</dbReference>
<dbReference type="RefSeq" id="NP_001296294.1">
    <property type="nucleotide sequence ID" value="NM_001309365.1"/>
</dbReference>
<dbReference type="SMR" id="P23322"/>
<dbReference type="FunCoup" id="P23322">
    <property type="interactions" value="1033"/>
</dbReference>
<dbReference type="STRING" id="4081.P23322"/>
<dbReference type="PaxDb" id="4081-Solyc02g065400.2.1"/>
<dbReference type="EnsemblPlants" id="Solyc02g065400.3.1">
    <property type="protein sequence ID" value="Solyc02g065400.3.1"/>
    <property type="gene ID" value="Solyc02g065400.3"/>
</dbReference>
<dbReference type="GeneID" id="544299"/>
<dbReference type="Gramene" id="Solyc02g065400.3.1">
    <property type="protein sequence ID" value="Solyc02g065400.3.1"/>
    <property type="gene ID" value="Solyc02g065400.3"/>
</dbReference>
<dbReference type="KEGG" id="sly:544299"/>
<dbReference type="eggNOG" id="ENOG502QRXA">
    <property type="taxonomic scope" value="Eukaryota"/>
</dbReference>
<dbReference type="HOGENOM" id="CLU_063138_0_0_1"/>
<dbReference type="InParanoid" id="P23322"/>
<dbReference type="OMA" id="WYAKLES"/>
<dbReference type="PhylomeDB" id="P23322"/>
<dbReference type="Proteomes" id="UP000004994">
    <property type="component" value="Chromosome 2"/>
</dbReference>
<dbReference type="ExpressionAtlas" id="P23322">
    <property type="expression patterns" value="baseline and differential"/>
</dbReference>
<dbReference type="GO" id="GO:0009535">
    <property type="term" value="C:chloroplast thylakoid membrane"/>
    <property type="evidence" value="ECO:0007669"/>
    <property type="project" value="UniProtKB-SubCell"/>
</dbReference>
<dbReference type="GO" id="GO:0009654">
    <property type="term" value="C:photosystem II oxygen evolving complex"/>
    <property type="evidence" value="ECO:0007669"/>
    <property type="project" value="InterPro"/>
</dbReference>
<dbReference type="GO" id="GO:0010242">
    <property type="term" value="F:oxygen evolving activity"/>
    <property type="evidence" value="ECO:0007669"/>
    <property type="project" value="InterPro"/>
</dbReference>
<dbReference type="GO" id="GO:0010207">
    <property type="term" value="P:photosystem II assembly"/>
    <property type="evidence" value="ECO:0007669"/>
    <property type="project" value="InterPro"/>
</dbReference>
<dbReference type="GO" id="GO:0042549">
    <property type="term" value="P:photosystem II stabilization"/>
    <property type="evidence" value="ECO:0007669"/>
    <property type="project" value="InterPro"/>
</dbReference>
<dbReference type="FunFam" id="3.30.2050.10:FF:000001">
    <property type="entry name" value="Oxygen-evolving enhancer protein 1, chloroplastic"/>
    <property type="match status" value="1"/>
</dbReference>
<dbReference type="Gene3D" id="3.30.2050.10">
    <property type="entry name" value="photosynthetic oxygen evolving center domain"/>
    <property type="match status" value="1"/>
</dbReference>
<dbReference type="Gene3D" id="2.40.160.30">
    <property type="entry name" value="Photosystem II, cytochrome c-550 precursor"/>
    <property type="match status" value="1"/>
</dbReference>
<dbReference type="InterPro" id="IPR011250">
    <property type="entry name" value="OMP/PagP_b-brl"/>
</dbReference>
<dbReference type="InterPro" id="IPR002628">
    <property type="entry name" value="PsbO"/>
</dbReference>
<dbReference type="PANTHER" id="PTHR34058">
    <property type="entry name" value="OXYGEN-EVOLVING ENHANCER PROTEIN 1-2, CHLOROPLASTIC"/>
    <property type="match status" value="1"/>
</dbReference>
<dbReference type="Pfam" id="PF01716">
    <property type="entry name" value="MSP"/>
    <property type="match status" value="1"/>
</dbReference>
<dbReference type="SUPFAM" id="SSF56925">
    <property type="entry name" value="OMPA-like"/>
    <property type="match status" value="1"/>
</dbReference>
<name>PSBO_SOLLC</name>
<proteinExistence type="evidence at transcript level"/>
<organism>
    <name type="scientific">Solanum lycopersicum</name>
    <name type="common">Tomato</name>
    <name type="synonym">Lycopersicon esculentum</name>
    <dbReference type="NCBI Taxonomy" id="4081"/>
    <lineage>
        <taxon>Eukaryota</taxon>
        <taxon>Viridiplantae</taxon>
        <taxon>Streptophyta</taxon>
        <taxon>Embryophyta</taxon>
        <taxon>Tracheophyta</taxon>
        <taxon>Spermatophyta</taxon>
        <taxon>Magnoliopsida</taxon>
        <taxon>eudicotyledons</taxon>
        <taxon>Gunneridae</taxon>
        <taxon>Pentapetalae</taxon>
        <taxon>asterids</taxon>
        <taxon>lamiids</taxon>
        <taxon>Solanales</taxon>
        <taxon>Solanaceae</taxon>
        <taxon>Solanoideae</taxon>
        <taxon>Solaneae</taxon>
        <taxon>Solanum</taxon>
        <taxon>Solanum subgen. Lycopersicon</taxon>
    </lineage>
</organism>
<comment type="function">
    <text evidence="1">Stabilizes the manganese cluster which is the primary site of water splitting.</text>
</comment>
<comment type="subcellular location">
    <subcellularLocation>
        <location>Plastid</location>
        <location>Chloroplast thylakoid membrane</location>
    </subcellularLocation>
    <text>Associated with the photosystem II complex.</text>
</comment>
<comment type="similarity">
    <text evidence="2">Belongs to the PsbO family.</text>
</comment>